<gene>
    <name type="primary">HSP90AB1</name>
    <name evidence="3" type="synonym">HSPC3</name>
    <name type="synonym">HSPCB</name>
</gene>
<feature type="chain" id="PRO_0000062916" description="Heat shock protein HSP 90-beta">
    <location>
        <begin position="1"/>
        <end position="724"/>
    </location>
</feature>
<feature type="region of interest" description="Interaction with TP53" evidence="3">
    <location>
        <begin position="1"/>
        <end position="527"/>
    </location>
</feature>
<feature type="region of interest" description="Interaction with BIRC2" evidence="3">
    <location>
        <begin position="1"/>
        <end position="214"/>
    </location>
</feature>
<feature type="region of interest" description="Interaction with NR3C1" evidence="4">
    <location>
        <begin position="9"/>
        <end position="231"/>
    </location>
</feature>
<feature type="region of interest" description="Interaction with AHSA1" evidence="3">
    <location>
        <begin position="215"/>
        <end position="552"/>
    </location>
</feature>
<feature type="region of interest" description="Disordered" evidence="6">
    <location>
        <begin position="222"/>
        <end position="270"/>
    </location>
</feature>
<feature type="region of interest" description="Interaction with NR3C1" evidence="4">
    <location>
        <begin position="264"/>
        <end position="608"/>
    </location>
</feature>
<feature type="region of interest" description="Interaction with NR1D1" evidence="4">
    <location>
        <begin position="620"/>
        <end position="723"/>
    </location>
</feature>
<feature type="region of interest" description="Disordered" evidence="6">
    <location>
        <begin position="695"/>
        <end position="724"/>
    </location>
</feature>
<feature type="short sequence motif" description="TPR repeat-binding">
    <location>
        <begin position="720"/>
        <end position="724"/>
    </location>
</feature>
<feature type="compositionally biased region" description="Acidic residues" evidence="6">
    <location>
        <begin position="225"/>
        <end position="244"/>
    </location>
</feature>
<feature type="binding site" evidence="1">
    <location>
        <position position="46"/>
    </location>
    <ligand>
        <name>ATP</name>
        <dbReference type="ChEBI" id="CHEBI:30616"/>
    </ligand>
</feature>
<feature type="binding site" evidence="1">
    <location>
        <position position="88"/>
    </location>
    <ligand>
        <name>ATP</name>
        <dbReference type="ChEBI" id="CHEBI:30616"/>
    </ligand>
</feature>
<feature type="binding site" evidence="1">
    <location>
        <position position="107"/>
    </location>
    <ligand>
        <name>ATP</name>
        <dbReference type="ChEBI" id="CHEBI:30616"/>
    </ligand>
</feature>
<feature type="binding site" evidence="1">
    <location>
        <position position="133"/>
    </location>
    <ligand>
        <name>ATP</name>
        <dbReference type="ChEBI" id="CHEBI:30616"/>
    </ligand>
</feature>
<feature type="binding site" evidence="1">
    <location>
        <position position="392"/>
    </location>
    <ligand>
        <name>ATP</name>
        <dbReference type="ChEBI" id="CHEBI:30616"/>
    </ligand>
</feature>
<feature type="site" description="Cleaved under oxidative stress" evidence="3">
    <location>
        <begin position="126"/>
        <end position="127"/>
    </location>
</feature>
<feature type="modified residue" description="N6-succinyllysine" evidence="4">
    <location>
        <position position="219"/>
    </location>
</feature>
<feature type="modified residue" description="Phosphoserine" evidence="3">
    <location>
        <position position="226"/>
    </location>
</feature>
<feature type="modified residue" description="Phosphoserine" evidence="3">
    <location>
        <position position="255"/>
    </location>
</feature>
<feature type="modified residue" description="Phosphoserine" evidence="4">
    <location>
        <position position="261"/>
    </location>
</feature>
<feature type="modified residue" description="Phosphothreonine" evidence="3">
    <location>
        <position position="297"/>
    </location>
</feature>
<feature type="modified residue" description="Phosphotyrosine" evidence="3">
    <location>
        <position position="301"/>
    </location>
</feature>
<feature type="modified residue" description="Phosphotyrosine" evidence="4">
    <location>
        <position position="305"/>
    </location>
</feature>
<feature type="modified residue" description="Phosphoserine" evidence="3">
    <location>
        <position position="307"/>
    </location>
</feature>
<feature type="modified residue" description="N6-malonyllysine" evidence="1">
    <location>
        <position position="399"/>
    </location>
</feature>
<feature type="modified residue" description="N6-acetyllysine" evidence="3">
    <location>
        <position position="435"/>
    </location>
</feature>
<feature type="modified residue" description="Phosphoserine" evidence="3">
    <location>
        <position position="445"/>
    </location>
</feature>
<feature type="modified residue" description="Phosphothreonine" evidence="3">
    <location>
        <position position="479"/>
    </location>
</feature>
<feature type="modified residue" description="N6-acetyllysine" evidence="3">
    <location>
        <position position="481"/>
    </location>
</feature>
<feature type="modified residue" description="Phosphotyrosine" evidence="4">
    <location>
        <position position="484"/>
    </location>
</feature>
<feature type="modified residue" description="N6-methylated lysine; alternate" evidence="3">
    <location>
        <position position="531"/>
    </location>
</feature>
<feature type="modified residue" description="N6-succinyllysine; alternate" evidence="4">
    <location>
        <position position="531"/>
    </location>
</feature>
<feature type="modified residue" description="N6-methylated lysine" evidence="3">
    <location>
        <position position="574"/>
    </location>
</feature>
<feature type="modified residue" description="N6-succinyllysine" evidence="4">
    <location>
        <position position="577"/>
    </location>
</feature>
<feature type="modified residue" description="S-nitrosocysteine" evidence="3">
    <location>
        <position position="590"/>
    </location>
</feature>
<feature type="modified residue" description="N6-acetyllysine" evidence="4">
    <location>
        <position position="624"/>
    </location>
</feature>
<feature type="modified residue" description="Phosphoserine" evidence="3">
    <location>
        <position position="669"/>
    </location>
</feature>
<feature type="modified residue" description="Phosphoserine; by PLK2 and PLK3" evidence="3">
    <location>
        <position position="718"/>
    </location>
</feature>
<feature type="glycosylation site" description="O-linked (GlcNAc) serine" evidence="1">
    <location>
        <position position="434"/>
    </location>
</feature>
<feature type="glycosylation site" description="O-linked (GlcNAc) serine" evidence="1">
    <location>
        <position position="452"/>
    </location>
</feature>
<feature type="sequence conflict" description="In Ref. 2; BAB20776." evidence="7" ref="2">
    <original>E</original>
    <variation>D</variation>
    <location>
        <position position="715"/>
    </location>
</feature>
<evidence type="ECO:0000250" key="1"/>
<evidence type="ECO:0000250" key="2">
    <source>
        <dbReference type="UniProtKB" id="P07900"/>
    </source>
</evidence>
<evidence type="ECO:0000250" key="3">
    <source>
        <dbReference type="UniProtKB" id="P08238"/>
    </source>
</evidence>
<evidence type="ECO:0000250" key="4">
    <source>
        <dbReference type="UniProtKB" id="P11499"/>
    </source>
</evidence>
<evidence type="ECO:0000250" key="5">
    <source>
        <dbReference type="UniProtKB" id="Q6AZV1"/>
    </source>
</evidence>
<evidence type="ECO:0000256" key="6">
    <source>
        <dbReference type="SAM" id="MobiDB-lite"/>
    </source>
</evidence>
<evidence type="ECO:0000305" key="7"/>
<keyword id="KW-0007">Acetylation</keyword>
<keyword id="KW-0067">ATP-binding</keyword>
<keyword id="KW-1003">Cell membrane</keyword>
<keyword id="KW-0143">Chaperone</keyword>
<keyword id="KW-0963">Cytoplasm</keyword>
<keyword id="KW-0325">Glycoprotein</keyword>
<keyword id="KW-0472">Membrane</keyword>
<keyword id="KW-0488">Methylation</keyword>
<keyword id="KW-0547">Nucleotide-binding</keyword>
<keyword id="KW-0539">Nucleus</keyword>
<keyword id="KW-0597">Phosphoprotein</keyword>
<keyword id="KW-1185">Reference proteome</keyword>
<keyword id="KW-0702">S-nitrosylation</keyword>
<keyword id="KW-0964">Secreted</keyword>
<keyword id="KW-0346">Stress response</keyword>
<keyword id="KW-0832">Ubl conjugation</keyword>
<comment type="function">
    <text evidence="3">Molecular chaperone that promotes the maturation, structural maintenance and proper regulation of specific target proteins involved for instance in cell cycle control and signal transduction. Undergoes a functional cycle linked to its ATPase activity. This cycle probably induces conformational changes in the client proteins, thereby causing their activation. Interacts dynamically with various co-chaperones that modulate its substrate recognition, ATPase cycle and chaperone function. Engages with a range of client protein classes via its interaction with various co-chaperone proteins or complexes, that act as adapters, simultaneously able to interact with the specific client and the central chaperone itself. Recruitment of ATP and co-chaperone followed by client protein forms a functional chaperone. After the completion of the chaperoning process, properly folded client protein and co-chaperone leave HSP90 in an ADP-bound partially open conformation and finally, ADP is released from HSP90 which acquires an open conformation for the next cycle. Apart from its chaperone activity, it also plays a role in the regulation of the transcription machinery. HSP90 and its co-chaperones modulate transcription at least at three different levels. They first alter the steady-state levels of certain transcription factors in response to various physiological cues. Second, they modulate the activity of certain epigenetic modifiers, such as histone deacetylases or DNA methyl transferases, and thereby respond to the change in the environment. Third, they participate in the eviction of histones from the promoter region of certain genes and thereby turn on gene expression. Antagonizes STUB1-mediated inhibition of TGF-beta signaling via inhibition of STUB1-mediated SMAD3 ubiquitination and degradation. Promotes cell differentiation by chaperoning BIRC2 and thereby protecting from auto-ubiquitination and degradation by the proteasomal machinery. Main chaperone involved in the phosphorylation/activation of the STAT1 by chaperoning both JAK2 and PRKCE under heat shock and in turn, activates its own transcription. Involved in the translocation into ERGIC (endoplasmic reticulum-Golgi intermediate compartment) of leaderless cargos (lacking the secretion signal sequence) such as the interleukin 1/IL-1; the translocation process is mediated by the cargo receptor TMED10.</text>
</comment>
<comment type="activity regulation">
    <text evidence="3">In the resting state, through the dimerization of its C-terminal domain, HSP90 forms a homodimer which is defined as the open conformation. Upon ATP-binding, the N-terminal domain undergoes significant conformational changes and comes in contact to form an active closed conformation. After HSP90 finishes its chaperoning tasks of assisting the proper folding, stabilization and activation of client proteins under the active state, ATP molecule is hydrolyzed to ADP which then dissociates from HSP90 and directs the protein back to the resting state.</text>
</comment>
<comment type="subunit">
    <text evidence="3 4">Monomer. Homodimer (By similarity). Forms a complex with CDK6 and CDC37. Interacts with UNC45A; binding to UNC45A involves 2 UNC45A monomers per HSP90AB1 dimer (By similarity). Interacts with CHORDC1 (By similarity). Interacts with DNAJC7. Interacts with FKBP4. May interact with NWD1. Interacts with SGTA. Interacts with HSF1 in an ATP-dependent manner. Interacts with MET; the interaction suppresses MET kinase activity. Interacts with ERBB2 in an ATP-dependent manner; the interaction suppresses ERBB2 kinase activity. Interacts with HIF1A, KEAP1 and RHOBTB2. Interacts with STUB1 and SMAD3. Interacts with XPO1 and AHSA1. Interacts with BIRC2. Interacts with KCNQ4; promotes cell surface expression of KCNQ4. Interacts with BIRC2; prevents auto-ubiquitination and degradation of its client protein BIRC2. Interacts with NOS3. Interacts with AHR; interaction is inhibited by HSP90AB1 phosphorylation on Ser-226 and Ser-255. Interacts with STIP1 and CDC37; upon SMYD2-dependent methylation. Interacts with JAK2 and PRKCE; promotes functional activation in a heat shock-dependent manner. Interacts with HSP90AA1; interaction is constitutive. HSP90AB1-CDC37 chaperone complex interacts with inactive MAPK7 (via N-terminal half) in resting cells; the interaction is MAP2K5-independent and prevents from ubiquitination and proteasomal degradation. Interacts with CDC25A; prevents heat shock-mediated CDC25A degradation and contributes to cell cycle progression. Interacts with TP53 (via DNA binding domain); suppresses TP53 aggregation and prevents from irreversible thermal inactivation. Interacts with TGFB1 processed form (LAP); inhibits latent TGFB1 activation (By similarity). Interacts with TRIM8; prevents nucleus translocation of phosphorylated STAT3 and HSP90AB1 (By similarity). Interacts with NR3C1 (via domain NR LBD) and NR1D1 (via domain NR LBD) (By similarity). Interacts with TTC4 (via TPR repeats) (By similarity). Interacts with IL1B; the interaction facilitates cargo translocation into the ERGIC (By similarity).</text>
</comment>
<comment type="subcellular location">
    <subcellularLocation>
        <location evidence="3">Cytoplasm</location>
    </subcellularLocation>
    <subcellularLocation>
        <location evidence="3">Melanosome</location>
    </subcellularLocation>
    <subcellularLocation>
        <location evidence="3">Nucleus</location>
    </subcellularLocation>
    <subcellularLocation>
        <location evidence="3">Secreted</location>
    </subcellularLocation>
    <subcellularLocation>
        <location evidence="3">Cell membrane</location>
    </subcellularLocation>
    <subcellularLocation>
        <location evidence="5">Dynein axonemal particle</location>
    </subcellularLocation>
    <text evidence="3">Translocates with BIRC2 from the nucleus to the cytoplasm during differentiation. Secreted when associated with TGFB1 processed form (LAP).</text>
</comment>
<comment type="domain">
    <text evidence="2">The TPR repeat-binding motif mediates interaction with TPR repeat-containing proteins.</text>
</comment>
<comment type="PTM">
    <text evidence="3">Ubiquitinated in the presence of STUB1-UBE2D1 complex (in vitro).</text>
</comment>
<comment type="PTM">
    <text evidence="3">ISGylated.</text>
</comment>
<comment type="PTM">
    <text evidence="3">S-nitrosylated; negatively regulates the ATPase activity.</text>
</comment>
<comment type="PTM">
    <text evidence="3">Phosphorylation at Tyr-301 by SRC is induced by lipopolysaccharide. Phosphorylation at Ser-226 and Ser-255 inhibits AHR interaction.</text>
</comment>
<comment type="PTM">
    <text evidence="3">Methylated by SMYD2; facilitates dimerization and chaperone complex formation; promotes cancer cell proliferation.</text>
</comment>
<comment type="PTM">
    <text evidence="3">Cleaved following oxidative stress resulting in HSP90AB1 protein radicals formation; disrupts the chaperoning function and the degradation of its client proteins.</text>
</comment>
<comment type="similarity">
    <text evidence="7">Belongs to the heat shock protein 90 family.</text>
</comment>
<sequence>MPEEVHHGEEEVETFAFQAEIAQLMSLIINTFYSNKEIFLRELISNASDALDKIRYESLTDPSKLDSGKELKIDIIPNPQERTLTLVDTGIGMTKADLINNLGTIAKSGTKAFMEALQAGADISMIGQFGVGFYSAYLVAEKVVVITKHNDDEQYAWESSAGGSFTVRADHGEPIGRGTKVILHLKEDQTEYLEERRVKEVVKKHSQFIGYPITLYLEKEREKEISDDEAEEEKGEKEEEDKDDEEKPKIEDVGSDEEDDSGKDKKKKTKKIKEKYIDQEELNKTKPIWTRNPDDITQEEYGEFYKSLTNDWEDHLAVKHFSVEGQLEFRALLFIPRRAPFDLFENKKKKNNIKLYVRRVFIMDSCDELIPEYLNFIRGVVDSEDLPLNISREMLQQSKILKVIRKNIVKKCLELFSELAEDKENYKKFYEAFSKNLKLGIHEDSTNRRRLSELLRYHTSQSGDEMTSLSEYVSRMKETQKSIYYITGESKEQVANSAFVERVRKRGFEVVYMTEPIDEYCVQQLKEFDGKSLVSVTKEGLELPEDEEEKKKMEESKAKFENLCKLMKEILDKKVEKVTISNRLVSSPCCIVTSTYGWTANMERIMKAQALRDNSTMGYMMAKKHLEINPDHPIVETLRQKAEADKNDKAVKDLVVLLFETALLSSGFSLEDPQTHSNRIYRMIKLGLGIDEDEVAAEEPSAAVPDEIPPLEGDEDASRMEEVD</sequence>
<dbReference type="EMBL" id="AY383484">
    <property type="protein sequence ID" value="AAQ88393.1"/>
    <property type="molecule type" value="mRNA"/>
</dbReference>
<dbReference type="EMBL" id="AB043676">
    <property type="protein sequence ID" value="BAB20776.1"/>
    <property type="molecule type" value="mRNA"/>
</dbReference>
<dbReference type="RefSeq" id="NP_001075407.1">
    <property type="nucleotide sequence ID" value="NM_001081938.2"/>
</dbReference>
<dbReference type="RefSeq" id="XP_023479779.1">
    <property type="nucleotide sequence ID" value="XM_023624011.2"/>
</dbReference>
<dbReference type="SMR" id="Q9GKX8"/>
<dbReference type="FunCoup" id="Q9GKX8">
    <property type="interactions" value="2857"/>
</dbReference>
<dbReference type="IntAct" id="Q9GKX8">
    <property type="interactions" value="1"/>
</dbReference>
<dbReference type="MINT" id="Q9GKX8"/>
<dbReference type="STRING" id="9796.ENSECAP00000006887"/>
<dbReference type="GlyCosmos" id="Q9GKX8">
    <property type="glycosylation" value="2 sites, No reported glycans"/>
</dbReference>
<dbReference type="PaxDb" id="9796-ENSECAP00000006887"/>
<dbReference type="PeptideAtlas" id="Q9GKX8"/>
<dbReference type="GeneID" id="100034150"/>
<dbReference type="KEGG" id="ecb:100034150"/>
<dbReference type="CTD" id="3326"/>
<dbReference type="HOGENOM" id="CLU_006684_1_3_1"/>
<dbReference type="InParanoid" id="Q9GKX8"/>
<dbReference type="OrthoDB" id="5426351at2759"/>
<dbReference type="TreeFam" id="TF300686"/>
<dbReference type="Proteomes" id="UP000002281">
    <property type="component" value="Unplaced"/>
</dbReference>
<dbReference type="GO" id="GO:0034751">
    <property type="term" value="C:aryl hydrocarbon receptor complex"/>
    <property type="evidence" value="ECO:0000250"/>
    <property type="project" value="UniProtKB"/>
</dbReference>
<dbReference type="GO" id="GO:0005737">
    <property type="term" value="C:cytoplasm"/>
    <property type="evidence" value="ECO:0000250"/>
    <property type="project" value="UniProtKB"/>
</dbReference>
<dbReference type="GO" id="GO:0005829">
    <property type="term" value="C:cytosol"/>
    <property type="evidence" value="ECO:0000318"/>
    <property type="project" value="GO_Central"/>
</dbReference>
<dbReference type="GO" id="GO:0120293">
    <property type="term" value="C:dynein axonemal particle"/>
    <property type="evidence" value="ECO:0000250"/>
    <property type="project" value="UniProtKB"/>
</dbReference>
<dbReference type="GO" id="GO:0005576">
    <property type="term" value="C:extracellular region"/>
    <property type="evidence" value="ECO:0000250"/>
    <property type="project" value="UniProtKB"/>
</dbReference>
<dbReference type="GO" id="GO:0042470">
    <property type="term" value="C:melanosome"/>
    <property type="evidence" value="ECO:0007669"/>
    <property type="project" value="UniProtKB-SubCell"/>
</dbReference>
<dbReference type="GO" id="GO:0005634">
    <property type="term" value="C:nucleus"/>
    <property type="evidence" value="ECO:0000250"/>
    <property type="project" value="UniProtKB"/>
</dbReference>
<dbReference type="GO" id="GO:0048471">
    <property type="term" value="C:perinuclear region of cytoplasm"/>
    <property type="evidence" value="ECO:0000318"/>
    <property type="project" value="GO_Central"/>
</dbReference>
<dbReference type="GO" id="GO:0005886">
    <property type="term" value="C:plasma membrane"/>
    <property type="evidence" value="ECO:0000318"/>
    <property type="project" value="GO_Central"/>
</dbReference>
<dbReference type="GO" id="GO:0032991">
    <property type="term" value="C:protein-containing complex"/>
    <property type="evidence" value="ECO:0000318"/>
    <property type="project" value="GO_Central"/>
</dbReference>
<dbReference type="GO" id="GO:0005524">
    <property type="term" value="F:ATP binding"/>
    <property type="evidence" value="ECO:0000318"/>
    <property type="project" value="GO_Central"/>
</dbReference>
<dbReference type="GO" id="GO:0016887">
    <property type="term" value="F:ATP hydrolysis activity"/>
    <property type="evidence" value="ECO:0000318"/>
    <property type="project" value="GO_Central"/>
</dbReference>
<dbReference type="GO" id="GO:0140662">
    <property type="term" value="F:ATP-dependent protein folding chaperone"/>
    <property type="evidence" value="ECO:0007669"/>
    <property type="project" value="InterPro"/>
</dbReference>
<dbReference type="GO" id="GO:0030235">
    <property type="term" value="F:nitric-oxide synthase regulator activity"/>
    <property type="evidence" value="ECO:0000250"/>
    <property type="project" value="UniProtKB"/>
</dbReference>
<dbReference type="GO" id="GO:0046983">
    <property type="term" value="F:protein dimerization activity"/>
    <property type="evidence" value="ECO:0000250"/>
    <property type="project" value="UniProtKB"/>
</dbReference>
<dbReference type="GO" id="GO:0141069">
    <property type="term" value="F:receptor ligand inhibitor activity"/>
    <property type="evidence" value="ECO:0000250"/>
    <property type="project" value="UniProtKB"/>
</dbReference>
<dbReference type="GO" id="GO:0030911">
    <property type="term" value="F:TPR domain binding"/>
    <property type="evidence" value="ECO:0000250"/>
    <property type="project" value="UniProtKB"/>
</dbReference>
<dbReference type="GO" id="GO:0051082">
    <property type="term" value="F:unfolded protein binding"/>
    <property type="evidence" value="ECO:0000318"/>
    <property type="project" value="GO_Central"/>
</dbReference>
<dbReference type="GO" id="GO:0034605">
    <property type="term" value="P:cellular response to heat"/>
    <property type="evidence" value="ECO:0000318"/>
    <property type="project" value="GO_Central"/>
</dbReference>
<dbReference type="GO" id="GO:0032435">
    <property type="term" value="P:negative regulation of proteasomal ubiquitin-dependent protein catabolic process"/>
    <property type="evidence" value="ECO:0000250"/>
    <property type="project" value="UniProtKB"/>
</dbReference>
<dbReference type="GO" id="GO:0045429">
    <property type="term" value="P:positive regulation of nitric oxide biosynthetic process"/>
    <property type="evidence" value="ECO:0000250"/>
    <property type="project" value="UniProtKB"/>
</dbReference>
<dbReference type="GO" id="GO:0030511">
    <property type="term" value="P:positive regulation of transforming growth factor beta receptor signaling pathway"/>
    <property type="evidence" value="ECO:0000250"/>
    <property type="project" value="UniProtKB"/>
</dbReference>
<dbReference type="GO" id="GO:0006457">
    <property type="term" value="P:protein folding"/>
    <property type="evidence" value="ECO:0000318"/>
    <property type="project" value="GO_Central"/>
</dbReference>
<dbReference type="GO" id="GO:0050821">
    <property type="term" value="P:protein stabilization"/>
    <property type="evidence" value="ECO:0000318"/>
    <property type="project" value="GO_Central"/>
</dbReference>
<dbReference type="GO" id="GO:0051726">
    <property type="term" value="P:regulation of cell cycle"/>
    <property type="evidence" value="ECO:0000250"/>
    <property type="project" value="UniProtKB"/>
</dbReference>
<dbReference type="CDD" id="cd16927">
    <property type="entry name" value="HATPase_Hsp90-like"/>
    <property type="match status" value="1"/>
</dbReference>
<dbReference type="FunFam" id="1.20.120.790:FF:000001">
    <property type="entry name" value="Heat shock protein 90 alpha"/>
    <property type="match status" value="1"/>
</dbReference>
<dbReference type="FunFam" id="3.30.230.80:FF:000001">
    <property type="entry name" value="Heat shock protein 90 alpha"/>
    <property type="match status" value="1"/>
</dbReference>
<dbReference type="FunFam" id="3.40.50.11260:FF:000001">
    <property type="entry name" value="Heat shock protein 90 alpha"/>
    <property type="match status" value="1"/>
</dbReference>
<dbReference type="FunFam" id="3.30.565.10:FF:000204">
    <property type="entry name" value="Heat shock protein HSP 90-beta"/>
    <property type="match status" value="1"/>
</dbReference>
<dbReference type="Gene3D" id="3.30.230.80">
    <property type="match status" value="1"/>
</dbReference>
<dbReference type="Gene3D" id="3.40.50.11260">
    <property type="match status" value="1"/>
</dbReference>
<dbReference type="Gene3D" id="1.20.120.790">
    <property type="entry name" value="Heat shock protein 90, C-terminal domain"/>
    <property type="match status" value="1"/>
</dbReference>
<dbReference type="Gene3D" id="3.30.565.10">
    <property type="entry name" value="Histidine kinase-like ATPase, C-terminal domain"/>
    <property type="match status" value="1"/>
</dbReference>
<dbReference type="HAMAP" id="MF_00505">
    <property type="entry name" value="HSP90"/>
    <property type="match status" value="1"/>
</dbReference>
<dbReference type="InterPro" id="IPR036890">
    <property type="entry name" value="HATPase_C_sf"/>
</dbReference>
<dbReference type="InterPro" id="IPR019805">
    <property type="entry name" value="Heat_shock_protein_90_CS"/>
</dbReference>
<dbReference type="InterPro" id="IPR037196">
    <property type="entry name" value="HSP90_C"/>
</dbReference>
<dbReference type="InterPro" id="IPR001404">
    <property type="entry name" value="Hsp90_fam"/>
</dbReference>
<dbReference type="InterPro" id="IPR020575">
    <property type="entry name" value="Hsp90_N"/>
</dbReference>
<dbReference type="InterPro" id="IPR020568">
    <property type="entry name" value="Ribosomal_Su5_D2-typ_SF"/>
</dbReference>
<dbReference type="NCBIfam" id="NF003555">
    <property type="entry name" value="PRK05218.1"/>
    <property type="match status" value="1"/>
</dbReference>
<dbReference type="PANTHER" id="PTHR11528">
    <property type="entry name" value="HEAT SHOCK PROTEIN 90 FAMILY MEMBER"/>
    <property type="match status" value="1"/>
</dbReference>
<dbReference type="Pfam" id="PF13589">
    <property type="entry name" value="HATPase_c_3"/>
    <property type="match status" value="1"/>
</dbReference>
<dbReference type="Pfam" id="PF00183">
    <property type="entry name" value="HSP90"/>
    <property type="match status" value="1"/>
</dbReference>
<dbReference type="PIRSF" id="PIRSF002583">
    <property type="entry name" value="Hsp90"/>
    <property type="match status" value="1"/>
</dbReference>
<dbReference type="PRINTS" id="PR00775">
    <property type="entry name" value="HEATSHOCK90"/>
</dbReference>
<dbReference type="SMART" id="SM00387">
    <property type="entry name" value="HATPase_c"/>
    <property type="match status" value="1"/>
</dbReference>
<dbReference type="SUPFAM" id="SSF55874">
    <property type="entry name" value="ATPase domain of HSP90 chaperone/DNA topoisomerase II/histidine kinase"/>
    <property type="match status" value="1"/>
</dbReference>
<dbReference type="SUPFAM" id="SSF110942">
    <property type="entry name" value="HSP90 C-terminal domain"/>
    <property type="match status" value="1"/>
</dbReference>
<dbReference type="SUPFAM" id="SSF54211">
    <property type="entry name" value="Ribosomal protein S5 domain 2-like"/>
    <property type="match status" value="1"/>
</dbReference>
<dbReference type="PROSITE" id="PS00298">
    <property type="entry name" value="HSP90"/>
    <property type="match status" value="1"/>
</dbReference>
<proteinExistence type="evidence at transcript level"/>
<accession>Q9GKX8</accession>
<accession>Q6TXV3</accession>
<reference key="1">
    <citation type="submission" date="2003-09" db="EMBL/GenBank/DDBJ databases">
        <title>Effects of exercise on transcriptional profiles in endurance horses.</title>
        <authorList>
            <person name="Cappelli K."/>
            <person name="Verini-Supplizi A."/>
            <person name="Silvestrelli M."/>
        </authorList>
    </citation>
    <scope>NUCLEOTIDE SEQUENCE [MRNA]</scope>
</reference>
<reference key="2">
    <citation type="journal article" date="2001" name="J. Vet. Med. Sci.">
        <title>Molecular cloning of horse Hsp90 cDNA and its comparative analysis with other vertebrate Hsp90 sequences.</title>
        <authorList>
            <person name="Pepin K."/>
            <person name="Momose F."/>
            <person name="Ishida N."/>
            <person name="Nagata K."/>
        </authorList>
    </citation>
    <scope>NUCLEOTIDE SEQUENCE [MRNA] OF 9-721</scope>
</reference>
<name>HS90B_HORSE</name>
<protein>
    <recommendedName>
        <fullName>Heat shock protein HSP 90-beta</fullName>
    </recommendedName>
</protein>
<organism>
    <name type="scientific">Equus caballus</name>
    <name type="common">Horse</name>
    <dbReference type="NCBI Taxonomy" id="9796"/>
    <lineage>
        <taxon>Eukaryota</taxon>
        <taxon>Metazoa</taxon>
        <taxon>Chordata</taxon>
        <taxon>Craniata</taxon>
        <taxon>Vertebrata</taxon>
        <taxon>Euteleostomi</taxon>
        <taxon>Mammalia</taxon>
        <taxon>Eutheria</taxon>
        <taxon>Laurasiatheria</taxon>
        <taxon>Perissodactyla</taxon>
        <taxon>Equidae</taxon>
        <taxon>Equus</taxon>
    </lineage>
</organism>